<comment type="similarity">
    <text evidence="2">Belongs to the mimivirus BTB/WD family.</text>
</comment>
<sequence length="551" mass="64685">MTKKMLDNLYKFSLEGKMTDIILEIEDDNSIITMNLHKNILAASCSYFDRLFNGNFLDSNTQKVKINVSNSLITKNIIKSFYGQENDVIDIPDWQYILEEIICKDYLGLDYDTSTLKDINVPSEYYDLLVYVAGIVGFNNPNITNLLTDLMPIDYDLTNISKDDIEFLLNRTGDCIFSLQGYESRYKTHRKYRLKILDSMTGNIIKTTNKYITKKFVYDFMNNEVICIDFDKNTSLIKCLKLSTNSEYEIKRSHNVENIILSNDGKILISYHIDKSETKFNSRRRSKEIAKSCLFKFFDVSDKKILFSFYIKEVVEKNTHIFNNHSDSEDDSPYCDELSKFYFEIKFMDISPDDKYLVCCFSTKFCLCLNIETKEVLWTTNLCNINNDNYYFNNSILSSSLYIVSLKDMIYVLDVSNGNTLKKIKKYNEGVYSFDDNVMMIYHSSKIEIYDWKNDKTIRTIKSTEKLLKHVYNPRTMTLYSSNNYDNIVSYKFNNFDIDTFTNRIISDDCDEFVFVNNYNKKIQDKLSDYLKTQNKTSEYDCVGSHINEID</sequence>
<name>YL076_MIMIV</name>
<dbReference type="EMBL" id="AY653733">
    <property type="protein sequence ID" value="AAV50351.1"/>
    <property type="molecule type" value="Genomic_DNA"/>
</dbReference>
<dbReference type="KEGG" id="vg:9924671"/>
<dbReference type="OrthoDB" id="7868at10239"/>
<dbReference type="Proteomes" id="UP000001134">
    <property type="component" value="Genome"/>
</dbReference>
<dbReference type="CDD" id="cd18186">
    <property type="entry name" value="BTB_POZ_ZBTB_KLHL-like"/>
    <property type="match status" value="1"/>
</dbReference>
<dbReference type="Gene3D" id="3.30.710.10">
    <property type="entry name" value="Potassium Channel Kv1.1, Chain A"/>
    <property type="match status" value="1"/>
</dbReference>
<dbReference type="Gene3D" id="2.130.10.10">
    <property type="entry name" value="YVTN repeat-like/Quinoprotein amine dehydrogenase"/>
    <property type="match status" value="1"/>
</dbReference>
<dbReference type="InterPro" id="IPR000210">
    <property type="entry name" value="BTB/POZ_dom"/>
</dbReference>
<dbReference type="InterPro" id="IPR011047">
    <property type="entry name" value="Quinoprotein_ADH-like_sf"/>
</dbReference>
<dbReference type="InterPro" id="IPR011333">
    <property type="entry name" value="SKP1/BTB/POZ_sf"/>
</dbReference>
<dbReference type="InterPro" id="IPR015943">
    <property type="entry name" value="WD40/YVTN_repeat-like_dom_sf"/>
</dbReference>
<dbReference type="Pfam" id="PF00651">
    <property type="entry name" value="BTB"/>
    <property type="match status" value="1"/>
</dbReference>
<dbReference type="SUPFAM" id="SSF54695">
    <property type="entry name" value="POZ domain"/>
    <property type="match status" value="1"/>
</dbReference>
<dbReference type="SUPFAM" id="SSF50998">
    <property type="entry name" value="Quinoprotein alcohol dehydrogenase-like"/>
    <property type="match status" value="1"/>
</dbReference>
<dbReference type="PROSITE" id="PS50097">
    <property type="entry name" value="BTB"/>
    <property type="match status" value="1"/>
</dbReference>
<keyword id="KW-1185">Reference proteome</keyword>
<reference key="1">
    <citation type="journal article" date="2004" name="Science">
        <title>The 1.2-megabase genome sequence of Mimivirus.</title>
        <authorList>
            <person name="Raoult D."/>
            <person name="Audic S."/>
            <person name="Robert C."/>
            <person name="Abergel C."/>
            <person name="Renesto P."/>
            <person name="Ogata H."/>
            <person name="La Scola B."/>
            <person name="Susan M."/>
            <person name="Claverie J.-M."/>
        </authorList>
    </citation>
    <scope>NUCLEOTIDE SEQUENCE [LARGE SCALE GENOMIC DNA]</scope>
    <source>
        <strain>Rowbotham-Bradford</strain>
    </source>
</reference>
<protein>
    <recommendedName>
        <fullName>Putative BTB/POZ domain-containing protein L76</fullName>
    </recommendedName>
</protein>
<evidence type="ECO:0000255" key="1">
    <source>
        <dbReference type="PROSITE-ProRule" id="PRU00037"/>
    </source>
</evidence>
<evidence type="ECO:0000305" key="2"/>
<feature type="chain" id="PRO_0000186225" description="Putative BTB/POZ domain-containing protein L76">
    <location>
        <begin position="1"/>
        <end position="551"/>
    </location>
</feature>
<feature type="domain" description="BTB" evidence="1">
    <location>
        <begin position="19"/>
        <end position="90"/>
    </location>
</feature>
<gene>
    <name type="ordered locus">MIMI_L76</name>
</gene>
<organismHost>
    <name type="scientific">Acanthamoeba polyphaga</name>
    <name type="common">Amoeba</name>
    <dbReference type="NCBI Taxonomy" id="5757"/>
</organismHost>
<organism>
    <name type="scientific">Acanthamoeba polyphaga mimivirus</name>
    <name type="common">APMV</name>
    <dbReference type="NCBI Taxonomy" id="212035"/>
    <lineage>
        <taxon>Viruses</taxon>
        <taxon>Varidnaviria</taxon>
        <taxon>Bamfordvirae</taxon>
        <taxon>Nucleocytoviricota</taxon>
        <taxon>Megaviricetes</taxon>
        <taxon>Imitervirales</taxon>
        <taxon>Mimiviridae</taxon>
        <taxon>Megamimivirinae</taxon>
        <taxon>Mimivirus</taxon>
        <taxon>Mimivirus bradfordmassiliense</taxon>
    </lineage>
</organism>
<proteinExistence type="inferred from homology"/>
<accession>Q5UPF2</accession>